<dbReference type="EC" id="2.1.2.3" evidence="1"/>
<dbReference type="EC" id="3.5.4.10" evidence="1"/>
<dbReference type="EMBL" id="CP000727">
    <property type="protein sequence ID" value="ABS38311.1"/>
    <property type="molecule type" value="Genomic_DNA"/>
</dbReference>
<dbReference type="EMBL" id="AM412317">
    <property type="protein sequence ID" value="CAL84439.1"/>
    <property type="molecule type" value="Genomic_DNA"/>
</dbReference>
<dbReference type="RefSeq" id="WP_003385254.1">
    <property type="nucleotide sequence ID" value="NC_009698.1"/>
</dbReference>
<dbReference type="RefSeq" id="YP_001255372.1">
    <property type="nucleotide sequence ID" value="NC_009495.1"/>
</dbReference>
<dbReference type="RefSeq" id="YP_001388606.1">
    <property type="nucleotide sequence ID" value="NC_009698.1"/>
</dbReference>
<dbReference type="SMR" id="A5I5V9"/>
<dbReference type="GeneID" id="5187064"/>
<dbReference type="KEGG" id="cbh:CLC_2771"/>
<dbReference type="KEGG" id="cbo:CBO2873"/>
<dbReference type="PATRIC" id="fig|413999.7.peg.2856"/>
<dbReference type="HOGENOM" id="CLU_016316_5_2_9"/>
<dbReference type="UniPathway" id="UPA00074">
    <property type="reaction ID" value="UER00133"/>
</dbReference>
<dbReference type="UniPathway" id="UPA00074">
    <property type="reaction ID" value="UER00135"/>
</dbReference>
<dbReference type="PRO" id="PR:A5I5V9"/>
<dbReference type="Proteomes" id="UP000001986">
    <property type="component" value="Chromosome"/>
</dbReference>
<dbReference type="GO" id="GO:0005829">
    <property type="term" value="C:cytosol"/>
    <property type="evidence" value="ECO:0000318"/>
    <property type="project" value="GO_Central"/>
</dbReference>
<dbReference type="GO" id="GO:0003937">
    <property type="term" value="F:IMP cyclohydrolase activity"/>
    <property type="evidence" value="ECO:0000318"/>
    <property type="project" value="GO_Central"/>
</dbReference>
<dbReference type="GO" id="GO:0004643">
    <property type="term" value="F:phosphoribosylaminoimidazolecarboxamide formyltransferase activity"/>
    <property type="evidence" value="ECO:0000318"/>
    <property type="project" value="GO_Central"/>
</dbReference>
<dbReference type="GO" id="GO:0006189">
    <property type="term" value="P:'de novo' IMP biosynthetic process"/>
    <property type="evidence" value="ECO:0000318"/>
    <property type="project" value="GO_Central"/>
</dbReference>
<dbReference type="CDD" id="cd01421">
    <property type="entry name" value="IMPCH"/>
    <property type="match status" value="1"/>
</dbReference>
<dbReference type="FunFam" id="3.40.140.20:FF:000001">
    <property type="entry name" value="Bifunctional purine biosynthesis protein PurH"/>
    <property type="match status" value="1"/>
</dbReference>
<dbReference type="FunFam" id="3.40.140.20:FF:000002">
    <property type="entry name" value="Bifunctional purine biosynthesis protein PurH"/>
    <property type="match status" value="1"/>
</dbReference>
<dbReference type="FunFam" id="3.40.50.1380:FF:000001">
    <property type="entry name" value="Bifunctional purine biosynthesis protein PurH"/>
    <property type="match status" value="1"/>
</dbReference>
<dbReference type="Gene3D" id="3.40.140.20">
    <property type="match status" value="2"/>
</dbReference>
<dbReference type="Gene3D" id="3.40.50.1380">
    <property type="entry name" value="Methylglyoxal synthase-like domain"/>
    <property type="match status" value="1"/>
</dbReference>
<dbReference type="HAMAP" id="MF_00139">
    <property type="entry name" value="PurH"/>
    <property type="match status" value="1"/>
</dbReference>
<dbReference type="InterPro" id="IPR024051">
    <property type="entry name" value="AICAR_Tfase_dup_dom_sf"/>
</dbReference>
<dbReference type="InterPro" id="IPR016193">
    <property type="entry name" value="Cytidine_deaminase-like"/>
</dbReference>
<dbReference type="InterPro" id="IPR011607">
    <property type="entry name" value="MGS-like_dom"/>
</dbReference>
<dbReference type="InterPro" id="IPR036914">
    <property type="entry name" value="MGS-like_dom_sf"/>
</dbReference>
<dbReference type="InterPro" id="IPR002695">
    <property type="entry name" value="PurH-like"/>
</dbReference>
<dbReference type="NCBIfam" id="NF002049">
    <property type="entry name" value="PRK00881.1"/>
    <property type="match status" value="1"/>
</dbReference>
<dbReference type="NCBIfam" id="TIGR00355">
    <property type="entry name" value="purH"/>
    <property type="match status" value="1"/>
</dbReference>
<dbReference type="PANTHER" id="PTHR11692:SF0">
    <property type="entry name" value="BIFUNCTIONAL PURINE BIOSYNTHESIS PROTEIN ATIC"/>
    <property type="match status" value="1"/>
</dbReference>
<dbReference type="PANTHER" id="PTHR11692">
    <property type="entry name" value="BIFUNCTIONAL PURINE BIOSYNTHESIS PROTEIN PURH"/>
    <property type="match status" value="1"/>
</dbReference>
<dbReference type="Pfam" id="PF01808">
    <property type="entry name" value="AICARFT_IMPCHas"/>
    <property type="match status" value="1"/>
</dbReference>
<dbReference type="Pfam" id="PF02142">
    <property type="entry name" value="MGS"/>
    <property type="match status" value="1"/>
</dbReference>
<dbReference type="PIRSF" id="PIRSF000414">
    <property type="entry name" value="AICARFT_IMPCHas"/>
    <property type="match status" value="1"/>
</dbReference>
<dbReference type="SMART" id="SM00798">
    <property type="entry name" value="AICARFT_IMPCHas"/>
    <property type="match status" value="1"/>
</dbReference>
<dbReference type="SMART" id="SM00851">
    <property type="entry name" value="MGS"/>
    <property type="match status" value="1"/>
</dbReference>
<dbReference type="SUPFAM" id="SSF53927">
    <property type="entry name" value="Cytidine deaminase-like"/>
    <property type="match status" value="1"/>
</dbReference>
<dbReference type="SUPFAM" id="SSF52335">
    <property type="entry name" value="Methylglyoxal synthase-like"/>
    <property type="match status" value="1"/>
</dbReference>
<dbReference type="PROSITE" id="PS51855">
    <property type="entry name" value="MGS"/>
    <property type="match status" value="1"/>
</dbReference>
<feature type="chain" id="PRO_1000018876" description="Bifunctional purine biosynthesis protein PurH">
    <location>
        <begin position="1"/>
        <end position="499"/>
    </location>
</feature>
<feature type="domain" description="MGS-like" evidence="2">
    <location>
        <begin position="1"/>
        <end position="144"/>
    </location>
</feature>
<gene>
    <name evidence="1" type="primary">purH</name>
    <name type="ordered locus">CBO2873</name>
    <name type="ordered locus">CLC_2771</name>
</gene>
<comment type="catalytic activity">
    <reaction evidence="1">
        <text>(6R)-10-formyltetrahydrofolate + 5-amino-1-(5-phospho-beta-D-ribosyl)imidazole-4-carboxamide = 5-formamido-1-(5-phospho-D-ribosyl)imidazole-4-carboxamide + (6S)-5,6,7,8-tetrahydrofolate</text>
        <dbReference type="Rhea" id="RHEA:22192"/>
        <dbReference type="ChEBI" id="CHEBI:57453"/>
        <dbReference type="ChEBI" id="CHEBI:58467"/>
        <dbReference type="ChEBI" id="CHEBI:58475"/>
        <dbReference type="ChEBI" id="CHEBI:195366"/>
        <dbReference type="EC" id="2.1.2.3"/>
    </reaction>
</comment>
<comment type="catalytic activity">
    <reaction evidence="1">
        <text>IMP + H2O = 5-formamido-1-(5-phospho-D-ribosyl)imidazole-4-carboxamide</text>
        <dbReference type="Rhea" id="RHEA:18445"/>
        <dbReference type="ChEBI" id="CHEBI:15377"/>
        <dbReference type="ChEBI" id="CHEBI:58053"/>
        <dbReference type="ChEBI" id="CHEBI:58467"/>
        <dbReference type="EC" id="3.5.4.10"/>
    </reaction>
</comment>
<comment type="pathway">
    <text evidence="1">Purine metabolism; IMP biosynthesis via de novo pathway; 5-formamido-1-(5-phospho-D-ribosyl)imidazole-4-carboxamide from 5-amino-1-(5-phospho-D-ribosyl)imidazole-4-carboxamide (10-formyl THF route): step 1/1.</text>
</comment>
<comment type="pathway">
    <text evidence="1">Purine metabolism; IMP biosynthesis via de novo pathway; IMP from 5-formamido-1-(5-phospho-D-ribosyl)imidazole-4-carboxamide: step 1/1.</text>
</comment>
<comment type="domain">
    <text evidence="1">The IMP cyclohydrolase activity resides in the N-terminal region.</text>
</comment>
<comment type="similarity">
    <text evidence="1">Belongs to the PurH family.</text>
</comment>
<accession>A5I5V9</accession>
<accession>A7G741</accession>
<reference key="1">
    <citation type="journal article" date="2007" name="Genome Res.">
        <title>Genome sequence of a proteolytic (Group I) Clostridium botulinum strain Hall A and comparative analysis of the clostridial genomes.</title>
        <authorList>
            <person name="Sebaihia M."/>
            <person name="Peck M.W."/>
            <person name="Minton N.P."/>
            <person name="Thomson N.R."/>
            <person name="Holden M.T.G."/>
            <person name="Mitchell W.J."/>
            <person name="Carter A.T."/>
            <person name="Bentley S.D."/>
            <person name="Mason D.R."/>
            <person name="Crossman L."/>
            <person name="Paul C.J."/>
            <person name="Ivens A."/>
            <person name="Wells-Bennik M.H.J."/>
            <person name="Davis I.J."/>
            <person name="Cerdeno-Tarraga A.M."/>
            <person name="Churcher C."/>
            <person name="Quail M.A."/>
            <person name="Chillingworth T."/>
            <person name="Feltwell T."/>
            <person name="Fraser A."/>
            <person name="Goodhead I."/>
            <person name="Hance Z."/>
            <person name="Jagels K."/>
            <person name="Larke N."/>
            <person name="Maddison M."/>
            <person name="Moule S."/>
            <person name="Mungall K."/>
            <person name="Norbertczak H."/>
            <person name="Rabbinowitsch E."/>
            <person name="Sanders M."/>
            <person name="Simmonds M."/>
            <person name="White B."/>
            <person name="Whithead S."/>
            <person name="Parkhill J."/>
        </authorList>
    </citation>
    <scope>NUCLEOTIDE SEQUENCE [LARGE SCALE GENOMIC DNA]</scope>
    <source>
        <strain>Hall / ATCC 3502 / NCTC 13319 / Type A</strain>
    </source>
</reference>
<reference key="2">
    <citation type="journal article" date="2007" name="PLoS ONE">
        <title>Analysis of the neurotoxin complex genes in Clostridium botulinum A1-A4 and B1 strains: BoNT/A3, /Ba4 and /B1 clusters are located within plasmids.</title>
        <authorList>
            <person name="Smith T.J."/>
            <person name="Hill K.K."/>
            <person name="Foley B.T."/>
            <person name="Detter J.C."/>
            <person name="Munk A.C."/>
            <person name="Bruce D.C."/>
            <person name="Doggett N.A."/>
            <person name="Smith L.A."/>
            <person name="Marks J.D."/>
            <person name="Xie G."/>
            <person name="Brettin T.S."/>
        </authorList>
    </citation>
    <scope>NUCLEOTIDE SEQUENCE [LARGE SCALE GENOMIC DNA]</scope>
    <source>
        <strain>Hall / ATCC 3502 / NCTC 13319 / Type A</strain>
    </source>
</reference>
<protein>
    <recommendedName>
        <fullName evidence="1">Bifunctional purine biosynthesis protein PurH</fullName>
    </recommendedName>
    <domain>
        <recommendedName>
            <fullName evidence="1">Phosphoribosylaminoimidazolecarboxamide formyltransferase</fullName>
            <ecNumber evidence="1">2.1.2.3</ecNumber>
        </recommendedName>
        <alternativeName>
            <fullName evidence="1">AICAR transformylase</fullName>
        </alternativeName>
    </domain>
    <domain>
        <recommendedName>
            <fullName evidence="1">IMP cyclohydrolase</fullName>
            <ecNumber evidence="1">3.5.4.10</ecNumber>
        </recommendedName>
        <alternativeName>
            <fullName evidence="1">ATIC</fullName>
        </alternativeName>
        <alternativeName>
            <fullName evidence="1">IMP synthase</fullName>
        </alternativeName>
        <alternativeName>
            <fullName evidence="1">Inosinicase</fullName>
        </alternativeName>
    </domain>
</protein>
<sequence>MIKRALISVFDKTGILDLAKFLESRDVEIISTGGTYKHLKENGVKVIDIEEVTGFPEMLDGRVKTLNPLIHGGILAIRDNEEHMKVIEEKGINPIDMVVVNLYPFFNKVEENLSFDEKVEFIDIGGPTMIRAAAKNFKDVVVLTDTKDYENVINEIKENNQVNIQTRKKLAGKVFNLMSAYDAAISNFLLEEEYPEYLTLSYKKNMDLRYGENPHQTAAYYTSTVGKYPMKNFEKLNGKELSYNNIKDMDIAWKTVCEFEEVACCALKHNTPCGVAIGDTVQEAYTKAYECDPISIFGGIVAFNRKVDKETAENLAKIFLEIVVAPDFDEDALEVLKNKKNLRVIKCEEKSTEGKDMAKVDGGILVQKSDNKLLEDTKVVTEKSPTEQEMKDLIFGMKVVKYVKSNAIVVVKDGMAKGIGGGQVNRIWAAKEALDRAGDGVVLASDAFFPFGDVAEEAAKWGIKAIIQPGGSIRDEESIKVCNEKGISMVFTGIRHFKH</sequence>
<keyword id="KW-0378">Hydrolase</keyword>
<keyword id="KW-0511">Multifunctional enzyme</keyword>
<keyword id="KW-0658">Purine biosynthesis</keyword>
<keyword id="KW-1185">Reference proteome</keyword>
<keyword id="KW-0808">Transferase</keyword>
<name>PUR9_CLOBH</name>
<evidence type="ECO:0000255" key="1">
    <source>
        <dbReference type="HAMAP-Rule" id="MF_00139"/>
    </source>
</evidence>
<evidence type="ECO:0000255" key="2">
    <source>
        <dbReference type="PROSITE-ProRule" id="PRU01202"/>
    </source>
</evidence>
<organism>
    <name type="scientific">Clostridium botulinum (strain Hall / ATCC 3502 / NCTC 13319 / Type A)</name>
    <dbReference type="NCBI Taxonomy" id="441771"/>
    <lineage>
        <taxon>Bacteria</taxon>
        <taxon>Bacillati</taxon>
        <taxon>Bacillota</taxon>
        <taxon>Clostridia</taxon>
        <taxon>Eubacteriales</taxon>
        <taxon>Clostridiaceae</taxon>
        <taxon>Clostridium</taxon>
    </lineage>
</organism>
<proteinExistence type="inferred from homology"/>